<keyword id="KW-1003">Cell membrane</keyword>
<keyword id="KW-0407">Ion channel</keyword>
<keyword id="KW-0406">Ion transport</keyword>
<keyword id="KW-0472">Membrane</keyword>
<keyword id="KW-0812">Transmembrane</keyword>
<keyword id="KW-1133">Transmembrane helix</keyword>
<keyword id="KW-0813">Transport</keyword>
<reference key="1">
    <citation type="journal article" date="2006" name="Proc. Natl. Acad. Sci. U.S.A.">
        <title>Comparative genomics of the lactic acid bacteria.</title>
        <authorList>
            <person name="Makarova K.S."/>
            <person name="Slesarev A."/>
            <person name="Wolf Y.I."/>
            <person name="Sorokin A."/>
            <person name="Mirkin B."/>
            <person name="Koonin E.V."/>
            <person name="Pavlov A."/>
            <person name="Pavlova N."/>
            <person name="Karamychev V."/>
            <person name="Polouchine N."/>
            <person name="Shakhova V."/>
            <person name="Grigoriev I."/>
            <person name="Lou Y."/>
            <person name="Rohksar D."/>
            <person name="Lucas S."/>
            <person name="Huang K."/>
            <person name="Goodstein D.M."/>
            <person name="Hawkins T."/>
            <person name="Plengvidhya V."/>
            <person name="Welker D."/>
            <person name="Hughes J."/>
            <person name="Goh Y."/>
            <person name="Benson A."/>
            <person name="Baldwin K."/>
            <person name="Lee J.-H."/>
            <person name="Diaz-Muniz I."/>
            <person name="Dosti B."/>
            <person name="Smeianov V."/>
            <person name="Wechter W."/>
            <person name="Barabote R."/>
            <person name="Lorca G."/>
            <person name="Altermann E."/>
            <person name="Barrangou R."/>
            <person name="Ganesan B."/>
            <person name="Xie Y."/>
            <person name="Rawsthorne H."/>
            <person name="Tamir D."/>
            <person name="Parker C."/>
            <person name="Breidt F."/>
            <person name="Broadbent J.R."/>
            <person name="Hutkins R."/>
            <person name="O'Sullivan D."/>
            <person name="Steele J."/>
            <person name="Unlu G."/>
            <person name="Saier M.H. Jr."/>
            <person name="Klaenhammer T."/>
            <person name="Richardson P."/>
            <person name="Kozyavkin S."/>
            <person name="Weimer B.C."/>
            <person name="Mills D.A."/>
        </authorList>
    </citation>
    <scope>NUCLEOTIDE SEQUENCE [LARGE SCALE GENOMIC DNA]</scope>
    <source>
        <strain>ATCC 33323 / DSM 20243 / BCRC 14619 / CIP 102991 / JCM 1131 / KCTC 3163 / NCIMB 11718 / NCTC 13722 / AM63</strain>
    </source>
</reference>
<organism>
    <name type="scientific">Lactobacillus gasseri (strain ATCC 33323 / DSM 20243 / BCRC 14619 / CIP 102991 / JCM 1131 / KCTC 3163 / NCIMB 11718 / NCTC 13722 / AM63)</name>
    <dbReference type="NCBI Taxonomy" id="324831"/>
    <lineage>
        <taxon>Bacteria</taxon>
        <taxon>Bacillati</taxon>
        <taxon>Bacillota</taxon>
        <taxon>Bacilli</taxon>
        <taxon>Lactobacillales</taxon>
        <taxon>Lactobacillaceae</taxon>
        <taxon>Lactobacillus</taxon>
    </lineage>
</organism>
<name>MSCL_LACGA</name>
<feature type="chain" id="PRO_1000015390" description="Large-conductance mechanosensitive channel">
    <location>
        <begin position="1"/>
        <end position="125"/>
    </location>
</feature>
<feature type="transmembrane region" description="Helical" evidence="1">
    <location>
        <begin position="15"/>
        <end position="35"/>
    </location>
</feature>
<feature type="transmembrane region" description="Helical" evidence="1">
    <location>
        <begin position="67"/>
        <end position="87"/>
    </location>
</feature>
<accession>Q041C3</accession>
<evidence type="ECO:0000255" key="1">
    <source>
        <dbReference type="HAMAP-Rule" id="MF_00115"/>
    </source>
</evidence>
<dbReference type="EMBL" id="CP000413">
    <property type="protein sequence ID" value="ABJ60949.1"/>
    <property type="molecule type" value="Genomic_DNA"/>
</dbReference>
<dbReference type="RefSeq" id="WP_003656060.1">
    <property type="nucleotide sequence ID" value="NZ_WBMG01000009.1"/>
</dbReference>
<dbReference type="SMR" id="Q041C3"/>
<dbReference type="GeneID" id="29639413"/>
<dbReference type="KEGG" id="lga:LGAS_1657"/>
<dbReference type="HOGENOM" id="CLU_095787_0_0_9"/>
<dbReference type="BioCyc" id="LGAS324831:G1G6Y-1651-MONOMER"/>
<dbReference type="Proteomes" id="UP000000664">
    <property type="component" value="Chromosome"/>
</dbReference>
<dbReference type="GO" id="GO:0005886">
    <property type="term" value="C:plasma membrane"/>
    <property type="evidence" value="ECO:0007669"/>
    <property type="project" value="UniProtKB-SubCell"/>
</dbReference>
<dbReference type="GO" id="GO:0008381">
    <property type="term" value="F:mechanosensitive monoatomic ion channel activity"/>
    <property type="evidence" value="ECO:0007669"/>
    <property type="project" value="UniProtKB-UniRule"/>
</dbReference>
<dbReference type="Gene3D" id="1.10.1200.120">
    <property type="entry name" value="Large-conductance mechanosensitive channel, MscL, domain 1"/>
    <property type="match status" value="1"/>
</dbReference>
<dbReference type="HAMAP" id="MF_00115">
    <property type="entry name" value="MscL"/>
    <property type="match status" value="1"/>
</dbReference>
<dbReference type="InterPro" id="IPR019823">
    <property type="entry name" value="Mechanosensitive_channel_CS"/>
</dbReference>
<dbReference type="InterPro" id="IPR001185">
    <property type="entry name" value="MS_channel"/>
</dbReference>
<dbReference type="InterPro" id="IPR037673">
    <property type="entry name" value="MSC/AndL"/>
</dbReference>
<dbReference type="InterPro" id="IPR036019">
    <property type="entry name" value="MscL_channel"/>
</dbReference>
<dbReference type="NCBIfam" id="TIGR00220">
    <property type="entry name" value="mscL"/>
    <property type="match status" value="1"/>
</dbReference>
<dbReference type="NCBIfam" id="NF001842">
    <property type="entry name" value="PRK00567.1-3"/>
    <property type="match status" value="1"/>
</dbReference>
<dbReference type="PANTHER" id="PTHR30266:SF2">
    <property type="entry name" value="LARGE-CONDUCTANCE MECHANOSENSITIVE CHANNEL"/>
    <property type="match status" value="1"/>
</dbReference>
<dbReference type="PANTHER" id="PTHR30266">
    <property type="entry name" value="MECHANOSENSITIVE CHANNEL MSCL"/>
    <property type="match status" value="1"/>
</dbReference>
<dbReference type="Pfam" id="PF01741">
    <property type="entry name" value="MscL"/>
    <property type="match status" value="1"/>
</dbReference>
<dbReference type="PRINTS" id="PR01264">
    <property type="entry name" value="MECHCHANNEL"/>
</dbReference>
<dbReference type="SUPFAM" id="SSF81330">
    <property type="entry name" value="Gated mechanosensitive channel"/>
    <property type="match status" value="1"/>
</dbReference>
<dbReference type="PROSITE" id="PS01327">
    <property type="entry name" value="MSCL"/>
    <property type="match status" value="1"/>
</dbReference>
<sequence length="125" mass="14127">MIKEFKEFISRGNMMDLAVGVIIGAAFTAIVNSLVKDLINPLIGLFIGKIDLSNLKFTVGEATFKYGSFLNAVINFLIIALVVFFLIKLVNKMMPKKEVEEDDPTPTNEELYLRQIRDLLQEKTK</sequence>
<comment type="function">
    <text evidence="1">Channel that opens in response to stretch forces in the membrane lipid bilayer. May participate in the regulation of osmotic pressure changes within the cell.</text>
</comment>
<comment type="subunit">
    <text evidence="1">Homopentamer.</text>
</comment>
<comment type="subcellular location">
    <subcellularLocation>
        <location evidence="1">Cell membrane</location>
        <topology evidence="1">Multi-pass membrane protein</topology>
    </subcellularLocation>
</comment>
<comment type="similarity">
    <text evidence="1">Belongs to the MscL family.</text>
</comment>
<protein>
    <recommendedName>
        <fullName evidence="1">Large-conductance mechanosensitive channel</fullName>
    </recommendedName>
</protein>
<gene>
    <name evidence="1" type="primary">mscL</name>
    <name type="ordered locus">LGAS_1657</name>
</gene>
<proteinExistence type="inferred from homology"/>